<comment type="function">
    <text evidence="1">Implicated in the regulation of circadian rhythms through autocrine and/or paracrine actions.</text>
</comment>
<comment type="subcellular location">
    <subcellularLocation>
        <location evidence="1">Secreted</location>
    </subcellularLocation>
</comment>
<comment type="similarity">
    <text evidence="3">Belongs to the NmU family.</text>
</comment>
<sequence>MKHLRPQFPLILAIYCFCMLQIPSSGFPQPLADPSDGLDIVQLEQLAYCLSQWAPLSRQPKDNQDIYKRFLFHYSRTQEATHPVKTGFPPVHPLMHLAAKLANRRMKRILQRGSGTAAVDFTKKDHTATWGRPFFLFRPRNGRNIEDEAQIQW</sequence>
<keyword id="KW-0002">3D-structure</keyword>
<keyword id="KW-0027">Amidation</keyword>
<keyword id="KW-0165">Cleavage on pair of basic residues</keyword>
<keyword id="KW-0527">Neuropeptide</keyword>
<keyword id="KW-1185">Reference proteome</keyword>
<keyword id="KW-0964">Secreted</keyword>
<keyword id="KW-0732">Signal</keyword>
<proteinExistence type="evidence at protein level"/>
<dbReference type="EMBL" id="AB164464">
    <property type="protein sequence ID" value="BAD89024.1"/>
    <property type="molecule type" value="mRNA"/>
</dbReference>
<dbReference type="CCDS" id="CCDS33259.1"/>
<dbReference type="RefSeq" id="NP_001011717.1">
    <property type="nucleotide sequence ID" value="NM_001011717.1"/>
</dbReference>
<dbReference type="PDB" id="7W56">
    <property type="method" value="EM"/>
    <property type="resolution" value="2.90 A"/>
    <property type="chains" value="C=109-141"/>
</dbReference>
<dbReference type="PDB" id="7W57">
    <property type="method" value="EM"/>
    <property type="resolution" value="3.20 A"/>
    <property type="chains" value="C=109-141"/>
</dbReference>
<dbReference type="PDBsum" id="7W56"/>
<dbReference type="PDBsum" id="7W57"/>
<dbReference type="EMDB" id="EMD-32315"/>
<dbReference type="EMDB" id="EMD-32316"/>
<dbReference type="SMR" id="Q5H8A3"/>
<dbReference type="BioGRID" id="126194">
    <property type="interactions" value="40"/>
</dbReference>
<dbReference type="FunCoup" id="Q5H8A3">
    <property type="interactions" value="379"/>
</dbReference>
<dbReference type="IntAct" id="Q5H8A3">
    <property type="interactions" value="26"/>
</dbReference>
<dbReference type="STRING" id="9606.ENSP00000366061"/>
<dbReference type="BioMuta" id="NMS"/>
<dbReference type="DMDM" id="74722605"/>
<dbReference type="PaxDb" id="9606-ENSP00000366061"/>
<dbReference type="TopDownProteomics" id="Q5H8A3"/>
<dbReference type="Antibodypedia" id="48800">
    <property type="antibodies" value="112 antibodies from 22 providers"/>
</dbReference>
<dbReference type="DNASU" id="129521"/>
<dbReference type="Ensembl" id="ENST00000376865.1">
    <property type="protein sequence ID" value="ENSP00000366061.1"/>
    <property type="gene ID" value="ENSG00000204640.1"/>
</dbReference>
<dbReference type="GeneID" id="129521"/>
<dbReference type="KEGG" id="hsa:129521"/>
<dbReference type="MANE-Select" id="ENST00000376865.1">
    <property type="protein sequence ID" value="ENSP00000366061.1"/>
    <property type="RefSeq nucleotide sequence ID" value="NM_001011717.1"/>
    <property type="RefSeq protein sequence ID" value="NP_001011717.1"/>
</dbReference>
<dbReference type="UCSC" id="uc002tan.1">
    <property type="organism name" value="human"/>
</dbReference>
<dbReference type="AGR" id="HGNC:32203"/>
<dbReference type="CTD" id="129521"/>
<dbReference type="DisGeNET" id="129521"/>
<dbReference type="GeneCards" id="NMS"/>
<dbReference type="HGNC" id="HGNC:32203">
    <property type="gene designation" value="NMS"/>
</dbReference>
<dbReference type="HPA" id="ENSG00000204640">
    <property type="expression patterns" value="Not detected"/>
</dbReference>
<dbReference type="MIM" id="619337">
    <property type="type" value="gene"/>
</dbReference>
<dbReference type="neXtProt" id="NX_Q5H8A3"/>
<dbReference type="OpenTargets" id="ENSG00000204640"/>
<dbReference type="PharmGKB" id="PA142671260"/>
<dbReference type="VEuPathDB" id="HostDB:ENSG00000204640"/>
<dbReference type="eggNOG" id="ENOG502SB16">
    <property type="taxonomic scope" value="Eukaryota"/>
</dbReference>
<dbReference type="GeneTree" id="ENSGT00510000049213"/>
<dbReference type="HOGENOM" id="CLU_090356_1_0_1"/>
<dbReference type="InParanoid" id="Q5H8A3"/>
<dbReference type="OMA" id="FCMLPIP"/>
<dbReference type="OrthoDB" id="9940794at2759"/>
<dbReference type="PAN-GO" id="Q5H8A3">
    <property type="GO annotations" value="0 GO annotations based on evolutionary models"/>
</dbReference>
<dbReference type="PhylomeDB" id="Q5H8A3"/>
<dbReference type="TreeFam" id="TF338319"/>
<dbReference type="PathwayCommons" id="Q5H8A3"/>
<dbReference type="Reactome" id="R-HSA-375276">
    <property type="pathway name" value="Peptide ligand-binding receptors"/>
</dbReference>
<dbReference type="Reactome" id="R-HSA-416476">
    <property type="pathway name" value="G alpha (q) signalling events"/>
</dbReference>
<dbReference type="Reactome" id="R-HSA-418594">
    <property type="pathway name" value="G alpha (i) signalling events"/>
</dbReference>
<dbReference type="SignaLink" id="Q5H8A3"/>
<dbReference type="SIGNOR" id="Q5H8A3"/>
<dbReference type="BioGRID-ORCS" id="129521">
    <property type="hits" value="11 hits in 1133 CRISPR screens"/>
</dbReference>
<dbReference type="GenomeRNAi" id="129521"/>
<dbReference type="Pharos" id="Q5H8A3">
    <property type="development level" value="Tbio"/>
</dbReference>
<dbReference type="PRO" id="PR:Q5H8A3"/>
<dbReference type="Proteomes" id="UP000005640">
    <property type="component" value="Chromosome 2"/>
</dbReference>
<dbReference type="RNAct" id="Q5H8A3">
    <property type="molecule type" value="protein"/>
</dbReference>
<dbReference type="Bgee" id="ENSG00000204640">
    <property type="expression patterns" value="Expressed in hypothalamus and 19 other cell types or tissues"/>
</dbReference>
<dbReference type="ExpressionAtlas" id="Q5H8A3">
    <property type="expression patterns" value="baseline and differential"/>
</dbReference>
<dbReference type="GO" id="GO:0005576">
    <property type="term" value="C:extracellular region"/>
    <property type="evidence" value="ECO:0000304"/>
    <property type="project" value="Reactome"/>
</dbReference>
<dbReference type="GO" id="GO:0007218">
    <property type="term" value="P:neuropeptide signaling pathway"/>
    <property type="evidence" value="ECO:0007669"/>
    <property type="project" value="UniProtKB-KW"/>
</dbReference>
<dbReference type="InterPro" id="IPR018070">
    <property type="entry name" value="Neuromedin-U_amidation-site"/>
</dbReference>
<dbReference type="InterPro" id="IPR043253">
    <property type="entry name" value="NmS"/>
</dbReference>
<dbReference type="PANTHER" id="PTHR32414">
    <property type="entry name" value="NEUROMEDIN-S"/>
    <property type="match status" value="1"/>
</dbReference>
<dbReference type="PANTHER" id="PTHR32414:SF2">
    <property type="entry name" value="NEUROMEDIN-S"/>
    <property type="match status" value="1"/>
</dbReference>
<dbReference type="PROSITE" id="PS00967">
    <property type="entry name" value="NMU"/>
    <property type="match status" value="1"/>
</dbReference>
<protein>
    <recommendedName>
        <fullName>Neuromedin-S</fullName>
    </recommendedName>
</protein>
<name>NMS_HUMAN</name>
<evidence type="ECO:0000250" key="1"/>
<evidence type="ECO:0000255" key="2"/>
<evidence type="ECO:0000305" key="3"/>
<reference key="1">
    <citation type="journal article" date="2005" name="EMBO J.">
        <title>Identification of neuromedin S and its possible role in the mammalian circadian oscillator system.</title>
        <authorList>
            <person name="Mori K."/>
            <person name="Miyazato M."/>
            <person name="Ida T."/>
            <person name="Murakami N."/>
            <person name="Serino R."/>
            <person name="Ueta Y."/>
            <person name="Kojima M."/>
            <person name="Kangawa K."/>
        </authorList>
    </citation>
    <scope>NUCLEOTIDE SEQUENCE [MRNA]</scope>
    <source>
        <tissue>Brain</tissue>
    </source>
</reference>
<gene>
    <name type="primary">NMS</name>
</gene>
<organism>
    <name type="scientific">Homo sapiens</name>
    <name type="common">Human</name>
    <dbReference type="NCBI Taxonomy" id="9606"/>
    <lineage>
        <taxon>Eukaryota</taxon>
        <taxon>Metazoa</taxon>
        <taxon>Chordata</taxon>
        <taxon>Craniata</taxon>
        <taxon>Vertebrata</taxon>
        <taxon>Euteleostomi</taxon>
        <taxon>Mammalia</taxon>
        <taxon>Eutheria</taxon>
        <taxon>Euarchontoglires</taxon>
        <taxon>Primates</taxon>
        <taxon>Haplorrhini</taxon>
        <taxon>Catarrhini</taxon>
        <taxon>Hominidae</taxon>
        <taxon>Homo</taxon>
    </lineage>
</organism>
<accession>Q5H8A3</accession>
<feature type="signal peptide" evidence="2">
    <location>
        <begin position="1"/>
        <end position="26"/>
    </location>
</feature>
<feature type="propeptide" id="PRO_0000262480">
    <location>
        <begin position="27"/>
        <end position="69"/>
    </location>
</feature>
<feature type="propeptide" id="PRO_0000262481">
    <location>
        <begin position="70"/>
        <end position="105"/>
    </location>
</feature>
<feature type="propeptide" id="PRO_0000262482">
    <location>
        <begin position="106"/>
        <end position="108"/>
    </location>
</feature>
<feature type="peptide" id="PRO_0000262483" description="Neuromedin-S">
    <location>
        <begin position="109"/>
        <end position="141"/>
    </location>
</feature>
<feature type="propeptide" id="PRO_0000262484">
    <location>
        <begin position="144"/>
        <end position="153"/>
    </location>
</feature>
<feature type="modified residue" description="Asparagine amide" evidence="1">
    <location>
        <position position="141"/>
    </location>
</feature>
<feature type="sequence variant" id="VAR_029495" description="In dbSNP:rs13411940.">
    <original>P</original>
    <variation>S</variation>
    <location>
        <position position="6"/>
    </location>
</feature>